<dbReference type="EC" id="2.3.1.199" evidence="6"/>
<dbReference type="EMBL" id="AL162875">
    <property type="protein sequence ID" value="CAB85559.1"/>
    <property type="molecule type" value="Genomic_DNA"/>
</dbReference>
<dbReference type="EMBL" id="CP002688">
    <property type="protein sequence ID" value="AED90757.1"/>
    <property type="molecule type" value="Genomic_DNA"/>
</dbReference>
<dbReference type="EMBL" id="AK117173">
    <property type="protein sequence ID" value="BAC41850.1"/>
    <property type="molecule type" value="mRNA"/>
</dbReference>
<dbReference type="EMBL" id="BT005386">
    <property type="protein sequence ID" value="AAO63450.1"/>
    <property type="molecule type" value="mRNA"/>
</dbReference>
<dbReference type="PIR" id="T48449">
    <property type="entry name" value="T48449"/>
</dbReference>
<dbReference type="RefSeq" id="NP_196073.1">
    <property type="nucleotide sequence ID" value="NM_120535.3"/>
</dbReference>
<dbReference type="SMR" id="Q9LZ72"/>
<dbReference type="FunCoup" id="Q9LZ72">
    <property type="interactions" value="232"/>
</dbReference>
<dbReference type="STRING" id="3702.Q9LZ72"/>
<dbReference type="PaxDb" id="3702-AT5G04530.1"/>
<dbReference type="ProteomicsDB" id="230173"/>
<dbReference type="EnsemblPlants" id="AT5G04530.1">
    <property type="protein sequence ID" value="AT5G04530.1"/>
    <property type="gene ID" value="AT5G04530"/>
</dbReference>
<dbReference type="GeneID" id="830332"/>
<dbReference type="Gramene" id="AT5G04530.1">
    <property type="protein sequence ID" value="AT5G04530.1"/>
    <property type="gene ID" value="AT5G04530"/>
</dbReference>
<dbReference type="KEGG" id="ath:AT5G04530"/>
<dbReference type="Araport" id="AT5G04530"/>
<dbReference type="TAIR" id="AT5G04530">
    <property type="gene designation" value="KCS19"/>
</dbReference>
<dbReference type="eggNOG" id="ENOG502QVYT">
    <property type="taxonomic scope" value="Eukaryota"/>
</dbReference>
<dbReference type="HOGENOM" id="CLU_013238_3_1_1"/>
<dbReference type="InParanoid" id="Q9LZ72"/>
<dbReference type="OMA" id="MFETREN"/>
<dbReference type="PhylomeDB" id="Q9LZ72"/>
<dbReference type="BioCyc" id="ARA:AT5G04530-MONOMER"/>
<dbReference type="UniPathway" id="UPA00094"/>
<dbReference type="PRO" id="PR:Q9LZ72"/>
<dbReference type="Proteomes" id="UP000006548">
    <property type="component" value="Chromosome 5"/>
</dbReference>
<dbReference type="ExpressionAtlas" id="Q9LZ72">
    <property type="expression patterns" value="baseline and differential"/>
</dbReference>
<dbReference type="GO" id="GO:0016020">
    <property type="term" value="C:membrane"/>
    <property type="evidence" value="ECO:0007669"/>
    <property type="project" value="UniProtKB-SubCell"/>
</dbReference>
<dbReference type="GO" id="GO:0009922">
    <property type="term" value="F:fatty acid elongase activity"/>
    <property type="evidence" value="ECO:0007669"/>
    <property type="project" value="UniProtKB-EC"/>
</dbReference>
<dbReference type="GO" id="GO:0006633">
    <property type="term" value="P:fatty acid biosynthetic process"/>
    <property type="evidence" value="ECO:0007669"/>
    <property type="project" value="UniProtKB-UniPathway"/>
</dbReference>
<dbReference type="GO" id="GO:0009409">
    <property type="term" value="P:response to cold"/>
    <property type="evidence" value="ECO:0000270"/>
    <property type="project" value="TAIR"/>
</dbReference>
<dbReference type="GO" id="GO:0009416">
    <property type="term" value="P:response to light stimulus"/>
    <property type="evidence" value="ECO:0000270"/>
    <property type="project" value="TAIR"/>
</dbReference>
<dbReference type="CDD" id="cd00831">
    <property type="entry name" value="CHS_like"/>
    <property type="match status" value="1"/>
</dbReference>
<dbReference type="Gene3D" id="3.40.47.10">
    <property type="match status" value="1"/>
</dbReference>
<dbReference type="InterPro" id="IPR012392">
    <property type="entry name" value="3-ktacl-CoA_syn"/>
</dbReference>
<dbReference type="InterPro" id="IPR013747">
    <property type="entry name" value="ACP_syn_III_C"/>
</dbReference>
<dbReference type="InterPro" id="IPR013601">
    <property type="entry name" value="FAE1_typ3_polyketide_synth"/>
</dbReference>
<dbReference type="InterPro" id="IPR016039">
    <property type="entry name" value="Thiolase-like"/>
</dbReference>
<dbReference type="PANTHER" id="PTHR31561">
    <property type="entry name" value="3-KETOACYL-COA SYNTHASE"/>
    <property type="match status" value="1"/>
</dbReference>
<dbReference type="Pfam" id="PF08541">
    <property type="entry name" value="ACP_syn_III_C"/>
    <property type="match status" value="1"/>
</dbReference>
<dbReference type="Pfam" id="PF08392">
    <property type="entry name" value="FAE1_CUT1_RppA"/>
    <property type="match status" value="1"/>
</dbReference>
<dbReference type="PIRSF" id="PIRSF036417">
    <property type="entry name" value="3-ktacl-CoA_syn"/>
    <property type="match status" value="1"/>
</dbReference>
<dbReference type="SUPFAM" id="SSF53901">
    <property type="entry name" value="Thiolase-like"/>
    <property type="match status" value="2"/>
</dbReference>
<sequence length="464" mass="52613">MELFSLSSLLLLSTLFVFYIFKFVFKRRNQRNCYMLHYECYKGMEERKLDTETCAKVVQRNKNLGLEEYRFLLRTMASSGIGEETYGPRNVLEGREDSPTLLDAHSEMDEIMFDTLDKLFHKTKGSISPSDIDILVVNVSLFAPSPSLTSRVINRYKMREDIKSYNLSGLGCSASVISIDIVQRMFETRENALALVVSTETMGPHWYCGKDRSMMLSNCLFRAGGSSVLLTNAARFKNQALMKLVTVVRAHVGSDDEAYSCCIQMEDRDGHPGFLLTKYLKKAAARALTKNLQVLLPRVLPVKELIRYAIVRALKRRTSAKREPASSGIGLNLKTGLQHFCIHPGGRAIIEGVGKSLGLTEFDIEPARMALHRFGNTSSGGLWYVLGYMEAKNRLKKGEKILMMSMGAGFESNNCVWEVLKDLDDKNVWEDSVDRYPELSRIPNPFVEKYDWINDDTMSFVRVD</sequence>
<protein>
    <recommendedName>
        <fullName evidence="5">3-ketoacyl-CoA synthase 19</fullName>
        <shortName evidence="5">KCS-19</shortName>
        <ecNumber evidence="6">2.3.1.199</ecNumber>
    </recommendedName>
    <alternativeName>
        <fullName evidence="5">Very long-chain fatty acid condensing enzyme 19</fullName>
        <shortName evidence="5">VLCFA condensing enzyme 19</shortName>
    </alternativeName>
</protein>
<gene>
    <name evidence="5" type="primary">KCS19</name>
    <name evidence="7" type="synonym">KCS21</name>
    <name evidence="8" type="ordered locus">At5g04530</name>
    <name evidence="9" type="ORF">T32M21.130</name>
</gene>
<proteinExistence type="evidence at transcript level"/>
<evidence type="ECO:0000250" key="1">
    <source>
        <dbReference type="UniProtKB" id="Q38860"/>
    </source>
</evidence>
<evidence type="ECO:0000255" key="2"/>
<evidence type="ECO:0000269" key="3">
    <source>
    </source>
</evidence>
<evidence type="ECO:0000269" key="4">
    <source>
    </source>
</evidence>
<evidence type="ECO:0000303" key="5">
    <source>
    </source>
</evidence>
<evidence type="ECO:0000305" key="6"/>
<evidence type="ECO:0000305" key="7">
    <source>
    </source>
</evidence>
<evidence type="ECO:0000312" key="8">
    <source>
        <dbReference type="Araport" id="AT5G04530"/>
    </source>
</evidence>
<evidence type="ECO:0000312" key="9">
    <source>
        <dbReference type="EMBL" id="CAB85559.1"/>
    </source>
</evidence>
<accession>Q9LZ72</accession>
<comment type="catalytic activity">
    <reaction evidence="6">
        <text>a very-long-chain acyl-CoA + malonyl-CoA + H(+) = a very-long-chain 3-oxoacyl-CoA + CO2 + CoA</text>
        <dbReference type="Rhea" id="RHEA:32727"/>
        <dbReference type="ChEBI" id="CHEBI:15378"/>
        <dbReference type="ChEBI" id="CHEBI:16526"/>
        <dbReference type="ChEBI" id="CHEBI:57287"/>
        <dbReference type="ChEBI" id="CHEBI:57384"/>
        <dbReference type="ChEBI" id="CHEBI:90725"/>
        <dbReference type="ChEBI" id="CHEBI:90736"/>
        <dbReference type="EC" id="2.3.1.199"/>
    </reaction>
</comment>
<comment type="pathway">
    <text>Lipid metabolism; fatty acid biosynthesis.</text>
</comment>
<comment type="subcellular location">
    <subcellularLocation>
        <location evidence="2">Membrane</location>
        <topology evidence="2">Single-pass membrane protein</topology>
    </subcellularLocation>
</comment>
<comment type="tissue specificity">
    <text evidence="4">Expressed in siliques.</text>
</comment>
<comment type="induction">
    <text evidence="3 4">Repressed by herbicides such as flufenacet and benfuresate (PubMed:12916765). Down-regulated by low temperature, osmotic stress, salt and darkness (PubMed:18465198).</text>
</comment>
<comment type="similarity">
    <text evidence="6">Belongs to the thiolase-like superfamily. Chalcone/stilbene synthases family.</text>
</comment>
<organism>
    <name type="scientific">Arabidopsis thaliana</name>
    <name type="common">Mouse-ear cress</name>
    <dbReference type="NCBI Taxonomy" id="3702"/>
    <lineage>
        <taxon>Eukaryota</taxon>
        <taxon>Viridiplantae</taxon>
        <taxon>Streptophyta</taxon>
        <taxon>Embryophyta</taxon>
        <taxon>Tracheophyta</taxon>
        <taxon>Spermatophyta</taxon>
        <taxon>Magnoliopsida</taxon>
        <taxon>eudicotyledons</taxon>
        <taxon>Gunneridae</taxon>
        <taxon>Pentapetalae</taxon>
        <taxon>rosids</taxon>
        <taxon>malvids</taxon>
        <taxon>Brassicales</taxon>
        <taxon>Brassicaceae</taxon>
        <taxon>Camelineae</taxon>
        <taxon>Arabidopsis</taxon>
    </lineage>
</organism>
<keyword id="KW-0012">Acyltransferase</keyword>
<keyword id="KW-0472">Membrane</keyword>
<keyword id="KW-1185">Reference proteome</keyword>
<keyword id="KW-0808">Transferase</keyword>
<keyword id="KW-0812">Transmembrane</keyword>
<keyword id="KW-1133">Transmembrane helix</keyword>
<name>KCS19_ARATH</name>
<feature type="chain" id="PRO_0000249113" description="3-ketoacyl-CoA synthase 19">
    <location>
        <begin position="1"/>
        <end position="464"/>
    </location>
</feature>
<feature type="transmembrane region" description="Helical" evidence="2">
    <location>
        <begin position="3"/>
        <end position="25"/>
    </location>
</feature>
<feature type="domain" description="FAE" evidence="2">
    <location>
        <begin position="24"/>
        <end position="318"/>
    </location>
</feature>
<feature type="active site" evidence="1">
    <location>
        <position position="172"/>
    </location>
</feature>
<feature type="active site" evidence="1">
    <location>
        <position position="251"/>
    </location>
</feature>
<feature type="active site" evidence="1">
    <location>
        <position position="339"/>
    </location>
</feature>
<feature type="active site" evidence="1">
    <location>
        <position position="343"/>
    </location>
</feature>
<feature type="active site" evidence="1">
    <location>
        <position position="372"/>
    </location>
</feature>
<feature type="active site" evidence="1">
    <location>
        <position position="376"/>
    </location>
</feature>
<reference key="1">
    <citation type="journal article" date="2000" name="Nature">
        <title>Sequence and analysis of chromosome 5 of the plant Arabidopsis thaliana.</title>
        <authorList>
            <person name="Tabata S."/>
            <person name="Kaneko T."/>
            <person name="Nakamura Y."/>
            <person name="Kotani H."/>
            <person name="Kato T."/>
            <person name="Asamizu E."/>
            <person name="Miyajima N."/>
            <person name="Sasamoto S."/>
            <person name="Kimura T."/>
            <person name="Hosouchi T."/>
            <person name="Kawashima K."/>
            <person name="Kohara M."/>
            <person name="Matsumoto M."/>
            <person name="Matsuno A."/>
            <person name="Muraki A."/>
            <person name="Nakayama S."/>
            <person name="Nakazaki N."/>
            <person name="Naruo K."/>
            <person name="Okumura S."/>
            <person name="Shinpo S."/>
            <person name="Takeuchi C."/>
            <person name="Wada T."/>
            <person name="Watanabe A."/>
            <person name="Yamada M."/>
            <person name="Yasuda M."/>
            <person name="Sato S."/>
            <person name="de la Bastide M."/>
            <person name="Huang E."/>
            <person name="Spiegel L."/>
            <person name="Gnoj L."/>
            <person name="O'Shaughnessy A."/>
            <person name="Preston R."/>
            <person name="Habermann K."/>
            <person name="Murray J."/>
            <person name="Johnson D."/>
            <person name="Rohlfing T."/>
            <person name="Nelson J."/>
            <person name="Stoneking T."/>
            <person name="Pepin K."/>
            <person name="Spieth J."/>
            <person name="Sekhon M."/>
            <person name="Armstrong J."/>
            <person name="Becker M."/>
            <person name="Belter E."/>
            <person name="Cordum H."/>
            <person name="Cordes M."/>
            <person name="Courtney L."/>
            <person name="Courtney W."/>
            <person name="Dante M."/>
            <person name="Du H."/>
            <person name="Edwards J."/>
            <person name="Fryman J."/>
            <person name="Haakensen B."/>
            <person name="Lamar E."/>
            <person name="Latreille P."/>
            <person name="Leonard S."/>
            <person name="Meyer R."/>
            <person name="Mulvaney E."/>
            <person name="Ozersky P."/>
            <person name="Riley A."/>
            <person name="Strowmatt C."/>
            <person name="Wagner-McPherson C."/>
            <person name="Wollam A."/>
            <person name="Yoakum M."/>
            <person name="Bell M."/>
            <person name="Dedhia N."/>
            <person name="Parnell L."/>
            <person name="Shah R."/>
            <person name="Rodriguez M."/>
            <person name="Hoon See L."/>
            <person name="Vil D."/>
            <person name="Baker J."/>
            <person name="Kirchoff K."/>
            <person name="Toth K."/>
            <person name="King L."/>
            <person name="Bahret A."/>
            <person name="Miller B."/>
            <person name="Marra M.A."/>
            <person name="Martienssen R."/>
            <person name="McCombie W.R."/>
            <person name="Wilson R.K."/>
            <person name="Murphy G."/>
            <person name="Bancroft I."/>
            <person name="Volckaert G."/>
            <person name="Wambutt R."/>
            <person name="Duesterhoeft A."/>
            <person name="Stiekema W."/>
            <person name="Pohl T."/>
            <person name="Entian K.-D."/>
            <person name="Terryn N."/>
            <person name="Hartley N."/>
            <person name="Bent E."/>
            <person name="Johnson S."/>
            <person name="Langham S.-A."/>
            <person name="McCullagh B."/>
            <person name="Robben J."/>
            <person name="Grymonprez B."/>
            <person name="Zimmermann W."/>
            <person name="Ramsperger U."/>
            <person name="Wedler H."/>
            <person name="Balke K."/>
            <person name="Wedler E."/>
            <person name="Peters S."/>
            <person name="van Staveren M."/>
            <person name="Dirkse W."/>
            <person name="Mooijman P."/>
            <person name="Klein Lankhorst R."/>
            <person name="Weitzenegger T."/>
            <person name="Bothe G."/>
            <person name="Rose M."/>
            <person name="Hauf J."/>
            <person name="Berneiser S."/>
            <person name="Hempel S."/>
            <person name="Feldpausch M."/>
            <person name="Lamberth S."/>
            <person name="Villarroel R."/>
            <person name="Gielen J."/>
            <person name="Ardiles W."/>
            <person name="Bents O."/>
            <person name="Lemcke K."/>
            <person name="Kolesov G."/>
            <person name="Mayer K.F.X."/>
            <person name="Rudd S."/>
            <person name="Schoof H."/>
            <person name="Schueller C."/>
            <person name="Zaccaria P."/>
            <person name="Mewes H.-W."/>
            <person name="Bevan M."/>
            <person name="Fransz P.F."/>
        </authorList>
    </citation>
    <scope>NUCLEOTIDE SEQUENCE [LARGE SCALE GENOMIC DNA]</scope>
    <source>
        <strain>cv. Columbia</strain>
    </source>
</reference>
<reference key="2">
    <citation type="journal article" date="2017" name="Plant J.">
        <title>Araport11: a complete reannotation of the Arabidopsis thaliana reference genome.</title>
        <authorList>
            <person name="Cheng C.Y."/>
            <person name="Krishnakumar V."/>
            <person name="Chan A.P."/>
            <person name="Thibaud-Nissen F."/>
            <person name="Schobel S."/>
            <person name="Town C.D."/>
        </authorList>
    </citation>
    <scope>GENOME REANNOTATION</scope>
    <source>
        <strain>cv. Columbia</strain>
    </source>
</reference>
<reference key="3">
    <citation type="journal article" date="2002" name="Science">
        <title>Functional annotation of a full-length Arabidopsis cDNA collection.</title>
        <authorList>
            <person name="Seki M."/>
            <person name="Narusaka M."/>
            <person name="Kamiya A."/>
            <person name="Ishida J."/>
            <person name="Satou M."/>
            <person name="Sakurai T."/>
            <person name="Nakajima M."/>
            <person name="Enju A."/>
            <person name="Akiyama K."/>
            <person name="Oono Y."/>
            <person name="Muramatsu M."/>
            <person name="Hayashizaki Y."/>
            <person name="Kawai J."/>
            <person name="Carninci P."/>
            <person name="Itoh M."/>
            <person name="Ishii Y."/>
            <person name="Arakawa T."/>
            <person name="Shibata K."/>
            <person name="Shinagawa A."/>
            <person name="Shinozaki K."/>
        </authorList>
    </citation>
    <scope>NUCLEOTIDE SEQUENCE [LARGE SCALE MRNA]</scope>
    <source>
        <strain>cv. Columbia</strain>
    </source>
</reference>
<reference key="4">
    <citation type="journal article" date="2003" name="Science">
        <title>Empirical analysis of transcriptional activity in the Arabidopsis genome.</title>
        <authorList>
            <person name="Yamada K."/>
            <person name="Lim J."/>
            <person name="Dale J.M."/>
            <person name="Chen H."/>
            <person name="Shinn P."/>
            <person name="Palm C.J."/>
            <person name="Southwick A.M."/>
            <person name="Wu H.C."/>
            <person name="Kim C.J."/>
            <person name="Nguyen M."/>
            <person name="Pham P.K."/>
            <person name="Cheuk R.F."/>
            <person name="Karlin-Newmann G."/>
            <person name="Liu S.X."/>
            <person name="Lam B."/>
            <person name="Sakano H."/>
            <person name="Wu T."/>
            <person name="Yu G."/>
            <person name="Miranda M."/>
            <person name="Quach H.L."/>
            <person name="Tripp M."/>
            <person name="Chang C.H."/>
            <person name="Lee J.M."/>
            <person name="Toriumi M.J."/>
            <person name="Chan M.M."/>
            <person name="Tang C.C."/>
            <person name="Onodera C.S."/>
            <person name="Deng J.M."/>
            <person name="Akiyama K."/>
            <person name="Ansari Y."/>
            <person name="Arakawa T."/>
            <person name="Banh J."/>
            <person name="Banno F."/>
            <person name="Bowser L."/>
            <person name="Brooks S.Y."/>
            <person name="Carninci P."/>
            <person name="Chao Q."/>
            <person name="Choy N."/>
            <person name="Enju A."/>
            <person name="Goldsmith A.D."/>
            <person name="Gurjal M."/>
            <person name="Hansen N.F."/>
            <person name="Hayashizaki Y."/>
            <person name="Johnson-Hopson C."/>
            <person name="Hsuan V.W."/>
            <person name="Iida K."/>
            <person name="Karnes M."/>
            <person name="Khan S."/>
            <person name="Koesema E."/>
            <person name="Ishida J."/>
            <person name="Jiang P.X."/>
            <person name="Jones T."/>
            <person name="Kawai J."/>
            <person name="Kamiya A."/>
            <person name="Meyers C."/>
            <person name="Nakajima M."/>
            <person name="Narusaka M."/>
            <person name="Seki M."/>
            <person name="Sakurai T."/>
            <person name="Satou M."/>
            <person name="Tamse R."/>
            <person name="Vaysberg M."/>
            <person name="Wallender E.K."/>
            <person name="Wong C."/>
            <person name="Yamamura Y."/>
            <person name="Yuan S."/>
            <person name="Shinozaki K."/>
            <person name="Davis R.W."/>
            <person name="Theologis A."/>
            <person name="Ecker J.R."/>
        </authorList>
    </citation>
    <scope>NUCLEOTIDE SEQUENCE [LARGE SCALE MRNA]</scope>
    <source>
        <strain>cv. Columbia</strain>
    </source>
</reference>
<reference key="5">
    <citation type="journal article" date="2003" name="Pest Manag. Sci.">
        <title>Flufenacet herbicide treatment phenocopies the fiddlehead mutant in Arabidopsis thaliana.</title>
        <authorList>
            <person name="Lechelt-Kunze C."/>
            <person name="Meissner R.C."/>
            <person name="Drewes M."/>
            <person name="Tietjen K."/>
        </authorList>
    </citation>
    <scope>INDUCTION</scope>
    <scope>GENE FAMILY</scope>
</reference>
<reference key="6">
    <citation type="journal article" date="2008" name="Plant Mol. Biol.">
        <title>The VLCFA elongase gene family in Arabidopsis thaliana: phylogenetic analysis, 3D modelling and expression profiling.</title>
        <authorList>
            <person name="Joubes J."/>
            <person name="Raffaele S."/>
            <person name="Bourdenx B."/>
            <person name="Garcia C."/>
            <person name="Laroche-Traineau J."/>
            <person name="Moreau P."/>
            <person name="Domergue F."/>
            <person name="Lessire R."/>
        </authorList>
    </citation>
    <scope>GENE FAMILY</scope>
    <scope>NOMENCLATURE</scope>
    <scope>3D-STRUCTURE MODELING</scope>
    <scope>TISSUE SPECIFICITY</scope>
    <scope>INDUCTION</scope>
</reference>